<proteinExistence type="evidence at transcript level"/>
<keyword id="KW-0007">Acetylation</keyword>
<keyword id="KW-0010">Activator</keyword>
<keyword id="KW-0238">DNA-binding</keyword>
<keyword id="KW-1017">Isopeptide bond</keyword>
<keyword id="KW-0479">Metal-binding</keyword>
<keyword id="KW-0539">Nucleus</keyword>
<keyword id="KW-0597">Phosphoprotein</keyword>
<keyword id="KW-1185">Reference proteome</keyword>
<keyword id="KW-0677">Repeat</keyword>
<keyword id="KW-0804">Transcription</keyword>
<keyword id="KW-0805">Transcription regulation</keyword>
<keyword id="KW-0832">Ubl conjugation</keyword>
<keyword id="KW-0862">Zinc</keyword>
<keyword id="KW-0863">Zinc-finger</keyword>
<gene>
    <name type="primary">Znf143</name>
    <name type="synonym">Staf</name>
    <name type="synonym">Zfp143</name>
</gene>
<feature type="chain" id="PRO_0000248072" description="Zinc finger protein 143">
    <location>
        <begin position="1"/>
        <end position="638"/>
    </location>
</feature>
<feature type="zinc finger region" description="C2H2-type 1" evidence="3">
    <location>
        <begin position="237"/>
        <end position="261"/>
    </location>
</feature>
<feature type="zinc finger region" description="C2H2-type 2" evidence="3">
    <location>
        <begin position="267"/>
        <end position="291"/>
    </location>
</feature>
<feature type="zinc finger region" description="C2H2-type 3" evidence="3">
    <location>
        <begin position="297"/>
        <end position="321"/>
    </location>
</feature>
<feature type="zinc finger region" description="C2H2-type 4" evidence="3">
    <location>
        <begin position="327"/>
        <end position="351"/>
    </location>
</feature>
<feature type="zinc finger region" description="C2H2-type 5" evidence="3">
    <location>
        <begin position="357"/>
        <end position="381"/>
    </location>
</feature>
<feature type="zinc finger region" description="C2H2-type 6" evidence="3">
    <location>
        <begin position="387"/>
        <end position="411"/>
    </location>
</feature>
<feature type="zinc finger region" description="C2H2-type 7" evidence="3">
    <location>
        <begin position="417"/>
        <end position="440"/>
    </location>
</feature>
<feature type="modified residue" description="N-acetylmethionine" evidence="2">
    <location>
        <position position="1"/>
    </location>
</feature>
<feature type="modified residue" description="Phosphothreonine" evidence="2">
    <location>
        <position position="352"/>
    </location>
</feature>
<feature type="cross-link" description="Glycyl lysine isopeptide (Lys-Gly) (interchain with G-Cter in SUMO2)" evidence="2">
    <location>
        <position position="213"/>
    </location>
</feature>
<feature type="cross-link" description="Glycyl lysine isopeptide (Lys-Gly) (interchain with G-Cter in SUMO2)" evidence="2">
    <location>
        <position position="406"/>
    </location>
</feature>
<protein>
    <recommendedName>
        <fullName>Zinc finger protein 143</fullName>
        <shortName>Zfp-143</shortName>
    </recommendedName>
    <alternativeName>
        <fullName>Selenocysteine tRNA gene transcription-activating factor</fullName>
    </alternativeName>
</protein>
<comment type="function">
    <text evidence="1 2">Transcriptional activator. In complex with HCFC1 and ZNF143, regulates the expression of several genes, including AP2S1, ESCO2, OPHN1, RBL1, UBXN8 and ZNF32 (By similarity). Activates the gene for selenocysteine tRNA (tRNAsec). Binds to the SPH motif of small nuclear RNA (snRNA) gene promoters. Participates in efficient U6 RNA polymerase III transcription via its interaction with CHD8 (By similarity).</text>
</comment>
<comment type="subunit">
    <text evidence="2">Interacts with CHD8 (By similarity). Forms a complex with HCFC1 and ZNF143 (By similarity).</text>
</comment>
<comment type="subcellular location">
    <subcellularLocation>
        <location evidence="4">Nucleus</location>
    </subcellularLocation>
</comment>
<comment type="similarity">
    <text evidence="4">Belongs to the GLI C2H2-type zinc-finger protein family.</text>
</comment>
<comment type="sequence caution" evidence="4">
    <conflict type="erroneous initiation">
        <sequence resource="EMBL-CDS" id="AAH83578"/>
    </conflict>
</comment>
<dbReference type="EMBL" id="BC083578">
    <property type="protein sequence ID" value="AAH83578.1"/>
    <property type="status" value="ALT_INIT"/>
    <property type="molecule type" value="mRNA"/>
</dbReference>
<dbReference type="RefSeq" id="NP_001012169.1">
    <property type="nucleotide sequence ID" value="NM_001012169.1"/>
</dbReference>
<dbReference type="SMR" id="Q5XIU2"/>
<dbReference type="FunCoup" id="Q5XIU2">
    <property type="interactions" value="2797"/>
</dbReference>
<dbReference type="STRING" id="10116.ENSRNOP00000013733"/>
<dbReference type="iPTMnet" id="Q5XIU2"/>
<dbReference type="PhosphoSitePlus" id="Q5XIU2"/>
<dbReference type="PaxDb" id="10116-ENSRNOP00000013733"/>
<dbReference type="Ensembl" id="ENSRNOT00000013733.6">
    <property type="protein sequence ID" value="ENSRNOP00000013733.8"/>
    <property type="gene ID" value="ENSRNOG00000010087.7"/>
</dbReference>
<dbReference type="GeneID" id="361627"/>
<dbReference type="KEGG" id="rno:361627"/>
<dbReference type="UCSC" id="RGD:1305662">
    <property type="organism name" value="rat"/>
</dbReference>
<dbReference type="AGR" id="RGD:1305662"/>
<dbReference type="CTD" id="20841"/>
<dbReference type="RGD" id="1305662">
    <property type="gene designation" value="Zfp143"/>
</dbReference>
<dbReference type="eggNOG" id="KOG1721">
    <property type="taxonomic scope" value="Eukaryota"/>
</dbReference>
<dbReference type="GeneTree" id="ENSGT00940000157584"/>
<dbReference type="HOGENOM" id="CLU_027168_0_0_1"/>
<dbReference type="InParanoid" id="Q5XIU2"/>
<dbReference type="OMA" id="FPALMHG"/>
<dbReference type="OrthoDB" id="6077919at2759"/>
<dbReference type="PhylomeDB" id="Q5XIU2"/>
<dbReference type="TreeFam" id="TF333498"/>
<dbReference type="Reactome" id="R-RNO-212436">
    <property type="pathway name" value="Generic Transcription Pathway"/>
</dbReference>
<dbReference type="PRO" id="PR:Q5XIU2"/>
<dbReference type="Proteomes" id="UP000002494">
    <property type="component" value="Chromosome 1"/>
</dbReference>
<dbReference type="GO" id="GO:0005634">
    <property type="term" value="C:nucleus"/>
    <property type="evidence" value="ECO:0007669"/>
    <property type="project" value="UniProtKB-SubCell"/>
</dbReference>
<dbReference type="GO" id="GO:0003682">
    <property type="term" value="F:chromatin binding"/>
    <property type="evidence" value="ECO:0000314"/>
    <property type="project" value="RGD"/>
</dbReference>
<dbReference type="GO" id="GO:0001228">
    <property type="term" value="F:DNA-binding transcription activator activity, RNA polymerase II-specific"/>
    <property type="evidence" value="ECO:0000266"/>
    <property type="project" value="RGD"/>
</dbReference>
<dbReference type="GO" id="GO:0000981">
    <property type="term" value="F:DNA-binding transcription factor activity, RNA polymerase II-specific"/>
    <property type="evidence" value="ECO:0000318"/>
    <property type="project" value="GO_Central"/>
</dbReference>
<dbReference type="GO" id="GO:0000978">
    <property type="term" value="F:RNA polymerase II cis-regulatory region sequence-specific DNA binding"/>
    <property type="evidence" value="ECO:0000266"/>
    <property type="project" value="RGD"/>
</dbReference>
<dbReference type="GO" id="GO:0008270">
    <property type="term" value="F:zinc ion binding"/>
    <property type="evidence" value="ECO:0007669"/>
    <property type="project" value="UniProtKB-KW"/>
</dbReference>
<dbReference type="GO" id="GO:0048661">
    <property type="term" value="P:positive regulation of smooth muscle cell proliferation"/>
    <property type="evidence" value="ECO:0000315"/>
    <property type="project" value="RGD"/>
</dbReference>
<dbReference type="GO" id="GO:1905382">
    <property type="term" value="P:positive regulation of snRNA transcription by RNA polymerase II"/>
    <property type="evidence" value="ECO:0000266"/>
    <property type="project" value="RGD"/>
</dbReference>
<dbReference type="GO" id="GO:0045944">
    <property type="term" value="P:positive regulation of transcription by RNA polymerase II"/>
    <property type="evidence" value="ECO:0000315"/>
    <property type="project" value="RGD"/>
</dbReference>
<dbReference type="GO" id="GO:0006355">
    <property type="term" value="P:regulation of DNA-templated transcription"/>
    <property type="evidence" value="ECO:0000318"/>
    <property type="project" value="GO_Central"/>
</dbReference>
<dbReference type="FunFam" id="3.30.160.60:FF:000071">
    <property type="entry name" value="Putative zinc finger protein 143"/>
    <property type="match status" value="1"/>
</dbReference>
<dbReference type="FunFam" id="3.30.160.60:FF:000125">
    <property type="entry name" value="Putative zinc finger protein 143"/>
    <property type="match status" value="1"/>
</dbReference>
<dbReference type="FunFam" id="3.30.160.60:FF:000137">
    <property type="entry name" value="Putative zinc finger protein 143"/>
    <property type="match status" value="1"/>
</dbReference>
<dbReference type="FunFam" id="3.30.160.60:FF:000142">
    <property type="entry name" value="Putative zinc finger protein 143"/>
    <property type="match status" value="1"/>
</dbReference>
<dbReference type="FunFam" id="3.30.160.60:FF:000072">
    <property type="entry name" value="zinc finger protein 143 isoform X1"/>
    <property type="match status" value="1"/>
</dbReference>
<dbReference type="FunFam" id="3.30.160.60:FF:000236">
    <property type="entry name" value="zinc finger protein 143 isoform X1"/>
    <property type="match status" value="1"/>
</dbReference>
<dbReference type="FunFam" id="3.30.160.60:FF:000016">
    <property type="entry name" value="zinc finger protein 37 homolog"/>
    <property type="match status" value="1"/>
</dbReference>
<dbReference type="Gene3D" id="3.30.160.60">
    <property type="entry name" value="Classic Zinc Finger"/>
    <property type="match status" value="7"/>
</dbReference>
<dbReference type="InterPro" id="IPR036236">
    <property type="entry name" value="Znf_C2H2_sf"/>
</dbReference>
<dbReference type="InterPro" id="IPR013087">
    <property type="entry name" value="Znf_C2H2_type"/>
</dbReference>
<dbReference type="PANTHER" id="PTHR14003">
    <property type="entry name" value="TRANSCRIPTIONAL REPRESSOR PROTEIN YY"/>
    <property type="match status" value="1"/>
</dbReference>
<dbReference type="PANTHER" id="PTHR14003:SF23">
    <property type="entry name" value="ZINC FINGER PROTEIN 143"/>
    <property type="match status" value="1"/>
</dbReference>
<dbReference type="Pfam" id="PF00096">
    <property type="entry name" value="zf-C2H2"/>
    <property type="match status" value="6"/>
</dbReference>
<dbReference type="SMART" id="SM00355">
    <property type="entry name" value="ZnF_C2H2"/>
    <property type="match status" value="7"/>
</dbReference>
<dbReference type="SUPFAM" id="SSF57667">
    <property type="entry name" value="beta-beta-alpha zinc fingers"/>
    <property type="match status" value="3"/>
</dbReference>
<dbReference type="PROSITE" id="PS00028">
    <property type="entry name" value="ZINC_FINGER_C2H2_1"/>
    <property type="match status" value="7"/>
</dbReference>
<dbReference type="PROSITE" id="PS50157">
    <property type="entry name" value="ZINC_FINGER_C2H2_2"/>
    <property type="match status" value="7"/>
</dbReference>
<name>ZN143_RAT</name>
<accession>Q5XIU2</accession>
<evidence type="ECO:0000250" key="1"/>
<evidence type="ECO:0000250" key="2">
    <source>
        <dbReference type="UniProtKB" id="P52747"/>
    </source>
</evidence>
<evidence type="ECO:0000255" key="3">
    <source>
        <dbReference type="PROSITE-ProRule" id="PRU00042"/>
    </source>
</evidence>
<evidence type="ECO:0000305" key="4"/>
<sequence length="638" mass="68999">MLLAQINRDSQGMTEFPGGGMEAQHVTLCLTEAVTVADGDNLENMEGVSLQAVTLADGSTAYIQHNSKDGRLIDGQVIQLEDGSAAYVQHVPIPKSTGDSLRLEDGQAVQLEDGTTAFIHHTSKDSYDQSSLQAVQLEDGTTAYIHHAVQVPQPDTILAIQADGTVAGLHTGDATIDPDTISALEQYAAKVSIDGSEGVTSTGLIGENEQEKKMQIVLQGHATRVTPKSQQSGEKAFRCKYDGCGKLYTTAHHLKVHERSHTGDRPYQCEHSGCGKAFATGYGLKSHFRTHTGEKPYRCSEDNCTKSFKTSGDLQKHIRTHTGERPFKCPIEGCGRSFTTSNIRKVHIRTHTGERPYYCTEPGCGRAFASATNYKNHVRIHTGEKPYVCTVPGCDKRFTEYSSLYKHHVVHTHSKPYNCNHCGKTYKQISTLAMHKRTAHNDTEPIEEEQEAFFEPPPGQGDDVLKGSQITYVTGVEGEDIVSTQVATVTQSGLSQQVTLISQDGTQHVNISQADMQAIGNTITMVTQDGTPITVPTHDAVISSAGTHSVAMVTAEGTEGQQVAIVAQDLAAFHAASSEMGHQPHSHHLVTTETRPLTLVATSNGTQIAVQLGEQPSLEEAIRIASRIQQGETPGLDD</sequence>
<reference key="1">
    <citation type="journal article" date="2004" name="Genome Res.">
        <title>The status, quality, and expansion of the NIH full-length cDNA project: the Mammalian Gene Collection (MGC).</title>
        <authorList>
            <consortium name="The MGC Project Team"/>
        </authorList>
    </citation>
    <scope>NUCLEOTIDE SEQUENCE [LARGE SCALE MRNA]</scope>
    <source>
        <tissue>Kidney</tissue>
    </source>
</reference>
<organism>
    <name type="scientific">Rattus norvegicus</name>
    <name type="common">Rat</name>
    <dbReference type="NCBI Taxonomy" id="10116"/>
    <lineage>
        <taxon>Eukaryota</taxon>
        <taxon>Metazoa</taxon>
        <taxon>Chordata</taxon>
        <taxon>Craniata</taxon>
        <taxon>Vertebrata</taxon>
        <taxon>Euteleostomi</taxon>
        <taxon>Mammalia</taxon>
        <taxon>Eutheria</taxon>
        <taxon>Euarchontoglires</taxon>
        <taxon>Glires</taxon>
        <taxon>Rodentia</taxon>
        <taxon>Myomorpha</taxon>
        <taxon>Muroidea</taxon>
        <taxon>Muridae</taxon>
        <taxon>Murinae</taxon>
        <taxon>Rattus</taxon>
    </lineage>
</organism>